<name>MC4R_MOUSE</name>
<gene>
    <name type="primary">Mc4r</name>
</gene>
<proteinExistence type="evidence at protein level"/>
<organism>
    <name type="scientific">Mus musculus</name>
    <name type="common">Mouse</name>
    <dbReference type="NCBI Taxonomy" id="10090"/>
    <lineage>
        <taxon>Eukaryota</taxon>
        <taxon>Metazoa</taxon>
        <taxon>Chordata</taxon>
        <taxon>Craniata</taxon>
        <taxon>Vertebrata</taxon>
        <taxon>Euteleostomi</taxon>
        <taxon>Mammalia</taxon>
        <taxon>Eutheria</taxon>
        <taxon>Euarchontoglires</taxon>
        <taxon>Glires</taxon>
        <taxon>Rodentia</taxon>
        <taxon>Myomorpha</taxon>
        <taxon>Muroidea</taxon>
        <taxon>Muridae</taxon>
        <taxon>Murinae</taxon>
        <taxon>Mus</taxon>
        <taxon>Mus</taxon>
    </lineage>
</organism>
<protein>
    <recommendedName>
        <fullName>Melanocortin receptor 4</fullName>
        <shortName>MC4-R</shortName>
    </recommendedName>
</protein>
<dbReference type="EMBL" id="AF201662">
    <property type="protein sequence ID" value="AAG35602.1"/>
    <property type="molecule type" value="Genomic_DNA"/>
</dbReference>
<dbReference type="EMBL" id="AY684813">
    <property type="protein sequence ID" value="AAV92649.1"/>
    <property type="molecule type" value="Genomic_DNA"/>
</dbReference>
<dbReference type="EMBL" id="AY684814">
    <property type="protein sequence ID" value="AAV92650.1"/>
    <property type="molecule type" value="Genomic_DNA"/>
</dbReference>
<dbReference type="EMBL" id="AY684815">
    <property type="protein sequence ID" value="AAV92651.1"/>
    <property type="molecule type" value="Genomic_DNA"/>
</dbReference>
<dbReference type="EMBL" id="AY684818">
    <property type="protein sequence ID" value="AAV92654.1"/>
    <property type="molecule type" value="Genomic_DNA"/>
</dbReference>
<dbReference type="EMBL" id="AY684819">
    <property type="protein sequence ID" value="AAV92655.1"/>
    <property type="molecule type" value="Genomic_DNA"/>
</dbReference>
<dbReference type="EMBL" id="AY684820">
    <property type="protein sequence ID" value="AAV92656.1"/>
    <property type="molecule type" value="Genomic_DNA"/>
</dbReference>
<dbReference type="EMBL" id="AK136793">
    <property type="protein sequence ID" value="BAE23130.1"/>
    <property type="molecule type" value="mRNA"/>
</dbReference>
<dbReference type="EMBL" id="BC116957">
    <property type="protein sequence ID" value="AAI16958.1"/>
    <property type="molecule type" value="mRNA"/>
</dbReference>
<dbReference type="EMBL" id="BC116959">
    <property type="protein sequence ID" value="AAI16960.1"/>
    <property type="molecule type" value="mRNA"/>
</dbReference>
<dbReference type="EMBL" id="AB009664">
    <property type="protein sequence ID" value="BAA24015.1"/>
    <property type="molecule type" value="Genomic_DNA"/>
</dbReference>
<dbReference type="CCDS" id="CCDS29316.1"/>
<dbReference type="RefSeq" id="NP_058673.2">
    <property type="nucleotide sequence ID" value="NM_016977.4"/>
</dbReference>
<dbReference type="SMR" id="P56450"/>
<dbReference type="BioGRID" id="201341">
    <property type="interactions" value="2"/>
</dbReference>
<dbReference type="CORUM" id="P56450"/>
<dbReference type="FunCoup" id="P56450">
    <property type="interactions" value="1314"/>
</dbReference>
<dbReference type="STRING" id="10090.ENSMUSP00000054776"/>
<dbReference type="BindingDB" id="P56450"/>
<dbReference type="ChEMBL" id="CHEMBL3719"/>
<dbReference type="DrugCentral" id="P56450"/>
<dbReference type="GuidetoPHARMACOLOGY" id="285"/>
<dbReference type="GlyCosmos" id="P56450">
    <property type="glycosylation" value="4 sites, No reported glycans"/>
</dbReference>
<dbReference type="GlyGen" id="P56450">
    <property type="glycosylation" value="4 sites, 1 N-linked glycan (1 site)"/>
</dbReference>
<dbReference type="PhosphoSitePlus" id="P56450"/>
<dbReference type="PaxDb" id="10090-ENSMUSP00000054776"/>
<dbReference type="Antibodypedia" id="2947">
    <property type="antibodies" value="363 antibodies from 38 providers"/>
</dbReference>
<dbReference type="DNASU" id="17202"/>
<dbReference type="Ensembl" id="ENSMUST00000057942.4">
    <property type="protein sequence ID" value="ENSMUSP00000054776.3"/>
    <property type="gene ID" value="ENSMUSG00000047259.4"/>
</dbReference>
<dbReference type="GeneID" id="17202"/>
<dbReference type="KEGG" id="mmu:17202"/>
<dbReference type="UCSC" id="uc008ffv.2">
    <property type="organism name" value="mouse"/>
</dbReference>
<dbReference type="AGR" id="MGI:99457"/>
<dbReference type="CTD" id="4160"/>
<dbReference type="MGI" id="MGI:99457">
    <property type="gene designation" value="Mc4r"/>
</dbReference>
<dbReference type="VEuPathDB" id="HostDB:ENSMUSG00000047259"/>
<dbReference type="eggNOG" id="KOG3656">
    <property type="taxonomic scope" value="Eukaryota"/>
</dbReference>
<dbReference type="GeneTree" id="ENSGT01120000271819"/>
<dbReference type="HOGENOM" id="CLU_009579_13_0_1"/>
<dbReference type="InParanoid" id="P56450"/>
<dbReference type="OMA" id="FYISCPH"/>
<dbReference type="OrthoDB" id="5970330at2759"/>
<dbReference type="PhylomeDB" id="P56450"/>
<dbReference type="TreeFam" id="TF332646"/>
<dbReference type="Reactome" id="R-MMU-375276">
    <property type="pathway name" value="Peptide ligand-binding receptors"/>
</dbReference>
<dbReference type="Reactome" id="R-MMU-418555">
    <property type="pathway name" value="G alpha (s) signalling events"/>
</dbReference>
<dbReference type="BioGRID-ORCS" id="17202">
    <property type="hits" value="2 hits in 77 CRISPR screens"/>
</dbReference>
<dbReference type="PRO" id="PR:P56450"/>
<dbReference type="Proteomes" id="UP000000589">
    <property type="component" value="Chromosome 18"/>
</dbReference>
<dbReference type="RNAct" id="P56450">
    <property type="molecule type" value="protein"/>
</dbReference>
<dbReference type="Bgee" id="ENSMUSG00000047259">
    <property type="expression patterns" value="Expressed in cortical plate and 30 other cell types or tissues"/>
</dbReference>
<dbReference type="GO" id="GO:0005886">
    <property type="term" value="C:plasma membrane"/>
    <property type="evidence" value="ECO:0007669"/>
    <property type="project" value="UniProtKB-SubCell"/>
</dbReference>
<dbReference type="GO" id="GO:0004977">
    <property type="term" value="F:melanocortin receptor activity"/>
    <property type="evidence" value="ECO:0000314"/>
    <property type="project" value="MGI"/>
</dbReference>
<dbReference type="GO" id="GO:0004980">
    <property type="term" value="F:melanocyte-stimulating hormone receptor activity"/>
    <property type="evidence" value="ECO:0000314"/>
    <property type="project" value="MGI"/>
</dbReference>
<dbReference type="GO" id="GO:0042923">
    <property type="term" value="F:neuropeptide binding"/>
    <property type="evidence" value="ECO:0007669"/>
    <property type="project" value="Ensembl"/>
</dbReference>
<dbReference type="GO" id="GO:0031625">
    <property type="term" value="F:ubiquitin protein ligase binding"/>
    <property type="evidence" value="ECO:0007669"/>
    <property type="project" value="Ensembl"/>
</dbReference>
<dbReference type="GO" id="GO:0007189">
    <property type="term" value="P:adenylate cyclase-activating G protein-coupled receptor signaling pathway"/>
    <property type="evidence" value="ECO:0007669"/>
    <property type="project" value="Ensembl"/>
</dbReference>
<dbReference type="GO" id="GO:0007631">
    <property type="term" value="P:feeding behavior"/>
    <property type="evidence" value="ECO:0000315"/>
    <property type="project" value="MGI"/>
</dbReference>
<dbReference type="GO" id="GO:0030073">
    <property type="term" value="P:insulin secretion"/>
    <property type="evidence" value="ECO:0000316"/>
    <property type="project" value="MGI"/>
</dbReference>
<dbReference type="GO" id="GO:0045780">
    <property type="term" value="P:positive regulation of bone resorption"/>
    <property type="evidence" value="ECO:0000315"/>
    <property type="project" value="HGNC-UCL"/>
</dbReference>
<dbReference type="GO" id="GO:1903998">
    <property type="term" value="P:regulation of eating behavior"/>
    <property type="evidence" value="ECO:0000315"/>
    <property type="project" value="ARUK-UCL"/>
</dbReference>
<dbReference type="GO" id="GO:0019222">
    <property type="term" value="P:regulation of metabolic process"/>
    <property type="evidence" value="ECO:0000315"/>
    <property type="project" value="MGI"/>
</dbReference>
<dbReference type="GO" id="GO:0032094">
    <property type="term" value="P:response to food"/>
    <property type="evidence" value="ECO:0000315"/>
    <property type="project" value="MGI"/>
</dbReference>
<dbReference type="GO" id="GO:0032868">
    <property type="term" value="P:response to insulin"/>
    <property type="evidence" value="ECO:0000315"/>
    <property type="project" value="MGI"/>
</dbReference>
<dbReference type="GO" id="GO:1990680">
    <property type="term" value="P:response to melanocyte-stimulating hormone"/>
    <property type="evidence" value="ECO:0000315"/>
    <property type="project" value="ARUK-UCL"/>
</dbReference>
<dbReference type="CDD" id="cd15353">
    <property type="entry name" value="7tmA_MC4R"/>
    <property type="match status" value="1"/>
</dbReference>
<dbReference type="FunFam" id="1.20.1070.10:FF:000077">
    <property type="entry name" value="Melanocortin receptor 4"/>
    <property type="match status" value="1"/>
</dbReference>
<dbReference type="Gene3D" id="1.20.1070.10">
    <property type="entry name" value="Rhodopsin 7-helix transmembrane proteins"/>
    <property type="match status" value="1"/>
</dbReference>
<dbReference type="InterPro" id="IPR000276">
    <property type="entry name" value="GPCR_Rhodpsn"/>
</dbReference>
<dbReference type="InterPro" id="IPR017452">
    <property type="entry name" value="GPCR_Rhodpsn_7TM"/>
</dbReference>
<dbReference type="InterPro" id="IPR001908">
    <property type="entry name" value="MC3-5R"/>
</dbReference>
<dbReference type="InterPro" id="IPR000155">
    <property type="entry name" value="Mcort_rcpt_4"/>
</dbReference>
<dbReference type="InterPro" id="IPR001671">
    <property type="entry name" value="Melcrt_ACTH_rcpt"/>
</dbReference>
<dbReference type="PANTHER" id="PTHR22750">
    <property type="entry name" value="G-PROTEIN COUPLED RECEPTOR"/>
    <property type="match status" value="1"/>
</dbReference>
<dbReference type="Pfam" id="PF00001">
    <property type="entry name" value="7tm_1"/>
    <property type="match status" value="1"/>
</dbReference>
<dbReference type="PRINTS" id="PR00237">
    <property type="entry name" value="GPCRRHODOPSN"/>
</dbReference>
<dbReference type="PRINTS" id="PR00534">
    <property type="entry name" value="MCRFAMILY"/>
</dbReference>
<dbReference type="PRINTS" id="PR00535">
    <property type="entry name" value="MELNOCORTINR"/>
</dbReference>
<dbReference type="PRINTS" id="PR01062">
    <property type="entry name" value="MELNOCORTN4R"/>
</dbReference>
<dbReference type="SMART" id="SM01381">
    <property type="entry name" value="7TM_GPCR_Srsx"/>
    <property type="match status" value="1"/>
</dbReference>
<dbReference type="SUPFAM" id="SSF81321">
    <property type="entry name" value="Family A G protein-coupled receptor-like"/>
    <property type="match status" value="1"/>
</dbReference>
<dbReference type="PROSITE" id="PS00237">
    <property type="entry name" value="G_PROTEIN_RECEP_F1_1"/>
    <property type="match status" value="1"/>
</dbReference>
<dbReference type="PROSITE" id="PS50262">
    <property type="entry name" value="G_PROTEIN_RECEP_F1_2"/>
    <property type="match status" value="1"/>
</dbReference>
<keyword id="KW-0106">Calcium</keyword>
<keyword id="KW-1003">Cell membrane</keyword>
<keyword id="KW-1015">Disulfide bond</keyword>
<keyword id="KW-0297">G-protein coupled receptor</keyword>
<keyword id="KW-0325">Glycoprotein</keyword>
<keyword id="KW-0449">Lipoprotein</keyword>
<keyword id="KW-0472">Membrane</keyword>
<keyword id="KW-0479">Metal-binding</keyword>
<keyword id="KW-0564">Palmitate</keyword>
<keyword id="KW-0675">Receptor</keyword>
<keyword id="KW-1185">Reference proteome</keyword>
<keyword id="KW-0807">Transducer</keyword>
<keyword id="KW-0812">Transmembrane</keyword>
<keyword id="KW-1133">Transmembrane helix</keyword>
<accession>P56450</accession>
<accession>Q49NR4</accession>
<accession>Q9EQM7</accession>
<comment type="function">
    <text evidence="1 5 6">Hormone receptor that acts as a key component of the leptin-melanocortin pathway at the intersection of homeostatic maintenance of energetic state. Plays a role in regulating food intake: activation by a stimulating hormone such as anorexigenic alpha-melanocyte stimulating hormone (alpha-MSH) inhibits appetite, whereas binding to a natural antagonist like Agouti-related protein/AGRP promotes appetite. G-protein-coupled receptor that activates conventional Galphas signaling leading to induction of anorexogenic signaling in the hypothalamus to result in negative energy balance (By similarity). Regulates the firing activity of neurons from the hypothalamus by alpha-MSH and AGRP independently of Galphas signaling by ligand-induced coupling of closure of inwardly rectifying potassium channel KCNJ13 (PubMed:25600267). In intestinal epithelial cells, plays a role in the inhibition of hepatic glucose production via nesfatin-1/NUCB2 leading to increased cyclic adenosine monophosphate (cAMP) levels and glucagon-like peptide 1 (GLP-1) secretion in the intestinal epithelium (By similarity).</text>
</comment>
<comment type="subunit">
    <text evidence="1 4 5">Homodimer; disulfide-linked, also forms higher order oligomers. Interacts with GNAS (By similarity). Interacts with ATRNL1 (PubMed:14531729). Interacts with MGRN1; this interaction competes with GNAS-binding and thus inhibits agonist-induced cAMP production. Interacts with MRAP and MRAP2; these associated factors increase ligand-sensitivity and generation of cAMP (PubMed:23869016).</text>
</comment>
<comment type="subcellular location">
    <subcellularLocation>
        <location evidence="1">Cell membrane</location>
        <topology evidence="2">Multi-pass membrane protein</topology>
    </subcellularLocation>
</comment>
<comment type="similarity">
    <text evidence="3">Belongs to the G-protein coupled receptor 1 family.</text>
</comment>
<evidence type="ECO:0000250" key="1">
    <source>
        <dbReference type="UniProtKB" id="P32245"/>
    </source>
</evidence>
<evidence type="ECO:0000255" key="2"/>
<evidence type="ECO:0000255" key="3">
    <source>
        <dbReference type="PROSITE-ProRule" id="PRU00521"/>
    </source>
</evidence>
<evidence type="ECO:0000269" key="4">
    <source>
    </source>
</evidence>
<evidence type="ECO:0000269" key="5">
    <source>
    </source>
</evidence>
<evidence type="ECO:0000269" key="6">
    <source>
    </source>
</evidence>
<evidence type="ECO:0000305" key="7"/>
<reference key="1">
    <citation type="submission" date="1999-11" db="EMBL/GenBank/DDBJ databases">
        <title>Characterization of the melanocortin-4 receptor gene.</title>
        <authorList>
            <person name="Dumont L.M."/>
            <person name="Wu C.S."/>
            <person name="Mountjoy K.G."/>
        </authorList>
    </citation>
    <scope>NUCLEOTIDE SEQUENCE [GENOMIC DNA]</scope>
    <source>
        <strain>129/Sv</strain>
    </source>
</reference>
<reference key="2">
    <citation type="submission" date="1997-12" db="EMBL/GenBank/DDBJ databases">
        <authorList>
            <person name="Morooka Y."/>
            <person name="Oomizu S."/>
            <person name="Takeuchi S."/>
            <person name="Takahashi S."/>
        </authorList>
    </citation>
    <scope>NUCLEOTIDE SEQUENCE [GENOMIC DNA] OF 112-295</scope>
    <source>
        <strain>ICR</strain>
        <tissue>Pituitary anterior lobe</tissue>
    </source>
</reference>
<reference key="3">
    <citation type="submission" date="2004-07" db="EMBL/GenBank/DDBJ databases">
        <title>Analysis of Mc4r locus in DIO and DR mice.</title>
        <authorList>
            <person name="Reichwald K."/>
            <person name="Petz U."/>
            <person name="Klingenspor M."/>
            <person name="Platzer M."/>
        </authorList>
    </citation>
    <scope>NUCLEOTIDE SEQUENCE [GENOMIC DNA]</scope>
    <source>
        <strain>A/J</strain>
        <strain>AKR/J</strain>
        <strain>C57BL/6J</strain>
        <strain>CAST/EiJ</strain>
        <strain>SJL/J</strain>
        <strain>SWR/J</strain>
        <tissue>Spleen</tissue>
    </source>
</reference>
<reference key="4">
    <citation type="journal article" date="2005" name="Science">
        <title>The transcriptional landscape of the mammalian genome.</title>
        <authorList>
            <person name="Carninci P."/>
            <person name="Kasukawa T."/>
            <person name="Katayama S."/>
            <person name="Gough J."/>
            <person name="Frith M.C."/>
            <person name="Maeda N."/>
            <person name="Oyama R."/>
            <person name="Ravasi T."/>
            <person name="Lenhard B."/>
            <person name="Wells C."/>
            <person name="Kodzius R."/>
            <person name="Shimokawa K."/>
            <person name="Bajic V.B."/>
            <person name="Brenner S.E."/>
            <person name="Batalov S."/>
            <person name="Forrest A.R."/>
            <person name="Zavolan M."/>
            <person name="Davis M.J."/>
            <person name="Wilming L.G."/>
            <person name="Aidinis V."/>
            <person name="Allen J.E."/>
            <person name="Ambesi-Impiombato A."/>
            <person name="Apweiler R."/>
            <person name="Aturaliya R.N."/>
            <person name="Bailey T.L."/>
            <person name="Bansal M."/>
            <person name="Baxter L."/>
            <person name="Beisel K.W."/>
            <person name="Bersano T."/>
            <person name="Bono H."/>
            <person name="Chalk A.M."/>
            <person name="Chiu K.P."/>
            <person name="Choudhary V."/>
            <person name="Christoffels A."/>
            <person name="Clutterbuck D.R."/>
            <person name="Crowe M.L."/>
            <person name="Dalla E."/>
            <person name="Dalrymple B.P."/>
            <person name="de Bono B."/>
            <person name="Della Gatta G."/>
            <person name="di Bernardo D."/>
            <person name="Down T."/>
            <person name="Engstrom P."/>
            <person name="Fagiolini M."/>
            <person name="Faulkner G."/>
            <person name="Fletcher C.F."/>
            <person name="Fukushima T."/>
            <person name="Furuno M."/>
            <person name="Futaki S."/>
            <person name="Gariboldi M."/>
            <person name="Georgii-Hemming P."/>
            <person name="Gingeras T.R."/>
            <person name="Gojobori T."/>
            <person name="Green R.E."/>
            <person name="Gustincich S."/>
            <person name="Harbers M."/>
            <person name="Hayashi Y."/>
            <person name="Hensch T.K."/>
            <person name="Hirokawa N."/>
            <person name="Hill D."/>
            <person name="Huminiecki L."/>
            <person name="Iacono M."/>
            <person name="Ikeo K."/>
            <person name="Iwama A."/>
            <person name="Ishikawa T."/>
            <person name="Jakt M."/>
            <person name="Kanapin A."/>
            <person name="Katoh M."/>
            <person name="Kawasawa Y."/>
            <person name="Kelso J."/>
            <person name="Kitamura H."/>
            <person name="Kitano H."/>
            <person name="Kollias G."/>
            <person name="Krishnan S.P."/>
            <person name="Kruger A."/>
            <person name="Kummerfeld S.K."/>
            <person name="Kurochkin I.V."/>
            <person name="Lareau L.F."/>
            <person name="Lazarevic D."/>
            <person name="Lipovich L."/>
            <person name="Liu J."/>
            <person name="Liuni S."/>
            <person name="McWilliam S."/>
            <person name="Madan Babu M."/>
            <person name="Madera M."/>
            <person name="Marchionni L."/>
            <person name="Matsuda H."/>
            <person name="Matsuzawa S."/>
            <person name="Miki H."/>
            <person name="Mignone F."/>
            <person name="Miyake S."/>
            <person name="Morris K."/>
            <person name="Mottagui-Tabar S."/>
            <person name="Mulder N."/>
            <person name="Nakano N."/>
            <person name="Nakauchi H."/>
            <person name="Ng P."/>
            <person name="Nilsson R."/>
            <person name="Nishiguchi S."/>
            <person name="Nishikawa S."/>
            <person name="Nori F."/>
            <person name="Ohara O."/>
            <person name="Okazaki Y."/>
            <person name="Orlando V."/>
            <person name="Pang K.C."/>
            <person name="Pavan W.J."/>
            <person name="Pavesi G."/>
            <person name="Pesole G."/>
            <person name="Petrovsky N."/>
            <person name="Piazza S."/>
            <person name="Reed J."/>
            <person name="Reid J.F."/>
            <person name="Ring B.Z."/>
            <person name="Ringwald M."/>
            <person name="Rost B."/>
            <person name="Ruan Y."/>
            <person name="Salzberg S.L."/>
            <person name="Sandelin A."/>
            <person name="Schneider C."/>
            <person name="Schoenbach C."/>
            <person name="Sekiguchi K."/>
            <person name="Semple C.A."/>
            <person name="Seno S."/>
            <person name="Sessa L."/>
            <person name="Sheng Y."/>
            <person name="Shibata Y."/>
            <person name="Shimada H."/>
            <person name="Shimada K."/>
            <person name="Silva D."/>
            <person name="Sinclair B."/>
            <person name="Sperling S."/>
            <person name="Stupka E."/>
            <person name="Sugiura K."/>
            <person name="Sultana R."/>
            <person name="Takenaka Y."/>
            <person name="Taki K."/>
            <person name="Tammoja K."/>
            <person name="Tan S.L."/>
            <person name="Tang S."/>
            <person name="Taylor M.S."/>
            <person name="Tegner J."/>
            <person name="Teichmann S.A."/>
            <person name="Ueda H.R."/>
            <person name="van Nimwegen E."/>
            <person name="Verardo R."/>
            <person name="Wei C.L."/>
            <person name="Yagi K."/>
            <person name="Yamanishi H."/>
            <person name="Zabarovsky E."/>
            <person name="Zhu S."/>
            <person name="Zimmer A."/>
            <person name="Hide W."/>
            <person name="Bult C."/>
            <person name="Grimmond S.M."/>
            <person name="Teasdale R.D."/>
            <person name="Liu E.T."/>
            <person name="Brusic V."/>
            <person name="Quackenbush J."/>
            <person name="Wahlestedt C."/>
            <person name="Mattick J.S."/>
            <person name="Hume D.A."/>
            <person name="Kai C."/>
            <person name="Sasaki D."/>
            <person name="Tomaru Y."/>
            <person name="Fukuda S."/>
            <person name="Kanamori-Katayama M."/>
            <person name="Suzuki M."/>
            <person name="Aoki J."/>
            <person name="Arakawa T."/>
            <person name="Iida J."/>
            <person name="Imamura K."/>
            <person name="Itoh M."/>
            <person name="Kato T."/>
            <person name="Kawaji H."/>
            <person name="Kawagashira N."/>
            <person name="Kawashima T."/>
            <person name="Kojima M."/>
            <person name="Kondo S."/>
            <person name="Konno H."/>
            <person name="Nakano K."/>
            <person name="Ninomiya N."/>
            <person name="Nishio T."/>
            <person name="Okada M."/>
            <person name="Plessy C."/>
            <person name="Shibata K."/>
            <person name="Shiraki T."/>
            <person name="Suzuki S."/>
            <person name="Tagami M."/>
            <person name="Waki K."/>
            <person name="Watahiki A."/>
            <person name="Okamura-Oho Y."/>
            <person name="Suzuki H."/>
            <person name="Kawai J."/>
            <person name="Hayashizaki Y."/>
        </authorList>
    </citation>
    <scope>NUCLEOTIDE SEQUENCE [LARGE SCALE MRNA]</scope>
    <source>
        <strain>C57BL/6J</strain>
        <tissue>Diencephalon</tissue>
    </source>
</reference>
<reference key="5">
    <citation type="journal article" date="2004" name="Genome Res.">
        <title>The status, quality, and expansion of the NIH full-length cDNA project: the Mammalian Gene Collection (MGC).</title>
        <authorList>
            <consortium name="The MGC Project Team"/>
        </authorList>
    </citation>
    <scope>NUCLEOTIDE SEQUENCE [LARGE SCALE MRNA]</scope>
    <source>
        <tissue>Brain</tissue>
    </source>
</reference>
<reference key="6">
    <citation type="journal article" date="2003" name="Biochem. J.">
        <title>Characterization of a novel binding partner of the melanocortin-4 receptor: attractin-like protein.</title>
        <authorList>
            <person name="Haqq A.M."/>
            <person name="Rene P."/>
            <person name="Kishi T."/>
            <person name="Khong K."/>
            <person name="Lee C.E."/>
            <person name="Liu H."/>
            <person name="Friedman J.M."/>
            <person name="Elmquist J.K."/>
            <person name="Cone R.D."/>
        </authorList>
    </citation>
    <scope>INTERACTION WITH ATRNL1</scope>
</reference>
<reference key="7">
    <citation type="journal article" date="2013" name="Science">
        <title>Loss of function of the melanocortin 2 receptor accessory protein 2 is associated with mammalian obesity.</title>
        <authorList>
            <person name="Asai M."/>
            <person name="Ramachandrappa S."/>
            <person name="Joachim M."/>
            <person name="Shen Y."/>
            <person name="Zhang R."/>
            <person name="Nuthalapati N."/>
            <person name="Ramanathan V."/>
            <person name="Strochlic D.E."/>
            <person name="Ferket P."/>
            <person name="Linhart K."/>
            <person name="Ho C."/>
            <person name="Novoselova T.V."/>
            <person name="Garg S."/>
            <person name="Ridderstrale M."/>
            <person name="Marcus C."/>
            <person name="Hirschhorn J.N."/>
            <person name="Keogh J.M."/>
            <person name="O'Rahilly S."/>
            <person name="Chan L.F."/>
            <person name="Clark A.J."/>
            <person name="Farooqi I.S."/>
            <person name="Majzoub J.A."/>
        </authorList>
    </citation>
    <scope>FUNCTION</scope>
    <scope>INTERACTION WITH MRAP2</scope>
</reference>
<reference key="8">
    <citation type="journal article" date="2015" name="Nature">
        <title>G-protein-independent coupling of MC4R to Kir7.1 in hypothalamic neurons.</title>
        <authorList>
            <person name="Ghamari-Langroudi M."/>
            <person name="Digby G.J."/>
            <person name="Sebag J.A."/>
            <person name="Millhauser G.L."/>
            <person name="Palomino R."/>
            <person name="Matthews R."/>
            <person name="Gillyard T."/>
            <person name="Panaro B.L."/>
            <person name="Tough I.R."/>
            <person name="Cox H.M."/>
            <person name="Denton J.S."/>
            <person name="Cone R.D."/>
        </authorList>
    </citation>
    <scope>FUNCTION</scope>
</reference>
<sequence length="332" mass="36959">MNSTHHHGMYTSLHLWNRSSYGLHGNASESLGKGHPDGGCYEQLFVSPEVFVTLGVISLLENILVIVAIAKNKNLHSPMYFFICSLAVADMLVSVSNGSETIVITLLNSTDTDAQSFTVNIDNVIDSVICSSLLASICSLLSIAVDRYFTIFYALQYHNIMTVRRVGIIISCIWAACTVSGVLFIIYSDSSAVIICLISMFFTMLVLMASLYVHMFLMARLHIKRIAVLPGTGTIRQGTNMKGAITLTILIGVFVVCWAPFFLHLLFYISCPQNPYCVCFMSHFNLYLILIMCNAVIDPLIYALRSQELRKTFKEIICFYPLGGICELSSRY</sequence>
<feature type="chain" id="PRO_0000069724" description="Melanocortin receptor 4">
    <location>
        <begin position="1"/>
        <end position="332"/>
    </location>
</feature>
<feature type="topological domain" description="Extracellular" evidence="2">
    <location>
        <begin position="1"/>
        <end position="43"/>
    </location>
</feature>
<feature type="transmembrane region" description="Helical; Name=1" evidence="2">
    <location>
        <begin position="44"/>
        <end position="69"/>
    </location>
</feature>
<feature type="topological domain" description="Cytoplasmic" evidence="2">
    <location>
        <begin position="70"/>
        <end position="81"/>
    </location>
</feature>
<feature type="transmembrane region" description="Helical; Name=2" evidence="2">
    <location>
        <begin position="82"/>
        <end position="106"/>
    </location>
</feature>
<feature type="topological domain" description="Extracellular" evidence="2">
    <location>
        <begin position="107"/>
        <end position="123"/>
    </location>
</feature>
<feature type="transmembrane region" description="Helical; Name=3" evidence="2">
    <location>
        <begin position="124"/>
        <end position="145"/>
    </location>
</feature>
<feature type="topological domain" description="Cytoplasmic" evidence="2">
    <location>
        <begin position="146"/>
        <end position="165"/>
    </location>
</feature>
<feature type="transmembrane region" description="Helical; Name=4" evidence="2">
    <location>
        <begin position="166"/>
        <end position="186"/>
    </location>
</feature>
<feature type="topological domain" description="Extracellular" evidence="2">
    <location>
        <begin position="187"/>
        <end position="191"/>
    </location>
</feature>
<feature type="transmembrane region" description="Helical; Name=5" evidence="2">
    <location>
        <begin position="192"/>
        <end position="215"/>
    </location>
</feature>
<feature type="topological domain" description="Cytoplasmic" evidence="2">
    <location>
        <begin position="216"/>
        <end position="248"/>
    </location>
</feature>
<feature type="transmembrane region" description="Helical; Name=6" evidence="2">
    <location>
        <begin position="249"/>
        <end position="271"/>
    </location>
</feature>
<feature type="topological domain" description="Extracellular" evidence="2">
    <location>
        <begin position="272"/>
        <end position="280"/>
    </location>
</feature>
<feature type="transmembrane region" description="Helical; Name=7" evidence="2">
    <location>
        <begin position="281"/>
        <end position="304"/>
    </location>
</feature>
<feature type="topological domain" description="Cytoplasmic" evidence="2">
    <location>
        <begin position="305"/>
        <end position="332"/>
    </location>
</feature>
<feature type="binding site" evidence="1">
    <location>
        <position position="100"/>
    </location>
    <ligand>
        <name>Ca(2+)</name>
        <dbReference type="ChEBI" id="CHEBI:29108"/>
    </ligand>
</feature>
<feature type="binding site" evidence="1">
    <location>
        <position position="122"/>
    </location>
    <ligand>
        <name>Ca(2+)</name>
        <dbReference type="ChEBI" id="CHEBI:29108"/>
    </ligand>
</feature>
<feature type="binding site" evidence="1">
    <location>
        <position position="126"/>
    </location>
    <ligand>
        <name>Ca(2+)</name>
        <dbReference type="ChEBI" id="CHEBI:29108"/>
    </ligand>
</feature>
<feature type="lipid moiety-binding region" description="S-palmitoyl cysteine" evidence="2">
    <location>
        <position position="318"/>
    </location>
</feature>
<feature type="glycosylation site" description="N-linked (GlcNAc...) asparagine" evidence="2">
    <location>
        <position position="2"/>
    </location>
</feature>
<feature type="glycosylation site" description="N-linked (GlcNAc...) asparagine" evidence="2">
    <location>
        <position position="17"/>
    </location>
</feature>
<feature type="glycosylation site" description="N-linked (GlcNAc...) asparagine" evidence="2">
    <location>
        <position position="26"/>
    </location>
</feature>
<feature type="glycosylation site" description="N-linked (GlcNAc...) asparagine" evidence="2">
    <location>
        <position position="108"/>
    </location>
</feature>
<feature type="disulfide bond" evidence="1">
    <location>
        <begin position="40"/>
        <end position="279"/>
    </location>
</feature>
<feature type="disulfide bond" description="Interchain" evidence="3">
    <location>
        <position position="84"/>
    </location>
</feature>
<feature type="disulfide bond" evidence="1">
    <location>
        <begin position="271"/>
        <end position="277"/>
    </location>
</feature>
<feature type="sequence conflict" description="In Ref. 1; AAG35602." evidence="7" ref="1">
    <original>G</original>
    <variation>S</variation>
    <location>
        <position position="25"/>
    </location>
</feature>
<feature type="sequence conflict" description="In Ref. 2; BAA24015." evidence="7" ref="2">
    <original>I</original>
    <variation>M</variation>
    <location>
        <position position="291"/>
    </location>
</feature>